<gene>
    <name evidence="1" type="primary">lolB</name>
    <name type="ordered locus">FTT_0270</name>
</gene>
<organism>
    <name type="scientific">Francisella tularensis subsp. tularensis (strain SCHU S4 / Schu 4)</name>
    <dbReference type="NCBI Taxonomy" id="177416"/>
    <lineage>
        <taxon>Bacteria</taxon>
        <taxon>Pseudomonadati</taxon>
        <taxon>Pseudomonadota</taxon>
        <taxon>Gammaproteobacteria</taxon>
        <taxon>Thiotrichales</taxon>
        <taxon>Francisellaceae</taxon>
        <taxon>Francisella</taxon>
    </lineage>
</organism>
<comment type="function">
    <text evidence="1">Plays a critical role in the incorporation of lipoproteins in the outer membrane after they are released by the LolA protein.</text>
</comment>
<comment type="subunit">
    <text evidence="1">Monomer.</text>
</comment>
<comment type="subcellular location">
    <subcellularLocation>
        <location evidence="1">Cell outer membrane</location>
        <topology evidence="1">Lipid-anchor</topology>
    </subcellularLocation>
</comment>
<comment type="similarity">
    <text evidence="1">Belongs to the LolB family.</text>
</comment>
<comment type="sequence caution" evidence="2">
    <conflict type="erroneous initiation">
        <sequence resource="EMBL-CDS" id="CAG44903"/>
    </conflict>
</comment>
<name>LOLB_FRATT</name>
<accession>Q5NI20</accession>
<dbReference type="EMBL" id="AJ749949">
    <property type="protein sequence ID" value="CAG44903.1"/>
    <property type="status" value="ALT_INIT"/>
    <property type="molecule type" value="Genomic_DNA"/>
</dbReference>
<dbReference type="RefSeq" id="WP_003021714.1">
    <property type="nucleotide sequence ID" value="NZ_CP010290.1"/>
</dbReference>
<dbReference type="RefSeq" id="YP_169322.1">
    <property type="nucleotide sequence ID" value="NC_006570.2"/>
</dbReference>
<dbReference type="SMR" id="Q5NI20"/>
<dbReference type="STRING" id="177416.FTT_0270"/>
<dbReference type="DNASU" id="3191459"/>
<dbReference type="EnsemblBacteria" id="CAG44903">
    <property type="protein sequence ID" value="CAG44903"/>
    <property type="gene ID" value="FTT_0270"/>
</dbReference>
<dbReference type="KEGG" id="ftu:FTT_0270"/>
<dbReference type="eggNOG" id="COG3017">
    <property type="taxonomic scope" value="Bacteria"/>
</dbReference>
<dbReference type="OrthoDB" id="9797618at2"/>
<dbReference type="Proteomes" id="UP000001174">
    <property type="component" value="Chromosome"/>
</dbReference>
<dbReference type="GO" id="GO:0009279">
    <property type="term" value="C:cell outer membrane"/>
    <property type="evidence" value="ECO:0007669"/>
    <property type="project" value="UniProtKB-SubCell"/>
</dbReference>
<dbReference type="GO" id="GO:0044874">
    <property type="term" value="P:lipoprotein localization to outer membrane"/>
    <property type="evidence" value="ECO:0007669"/>
    <property type="project" value="UniProtKB-UniRule"/>
</dbReference>
<dbReference type="GO" id="GO:0015031">
    <property type="term" value="P:protein transport"/>
    <property type="evidence" value="ECO:0007669"/>
    <property type="project" value="UniProtKB-KW"/>
</dbReference>
<dbReference type="CDD" id="cd16326">
    <property type="entry name" value="LolB"/>
    <property type="match status" value="1"/>
</dbReference>
<dbReference type="Gene3D" id="2.50.20.10">
    <property type="entry name" value="Lipoprotein localisation LolA/LolB/LppX"/>
    <property type="match status" value="1"/>
</dbReference>
<dbReference type="HAMAP" id="MF_00233">
    <property type="entry name" value="LolB"/>
    <property type="match status" value="1"/>
</dbReference>
<dbReference type="InterPro" id="IPR029046">
    <property type="entry name" value="LolA/LolB/LppX"/>
</dbReference>
<dbReference type="InterPro" id="IPR004565">
    <property type="entry name" value="OM_lipoprot_LolB"/>
</dbReference>
<dbReference type="NCBIfam" id="TIGR00548">
    <property type="entry name" value="lolB"/>
    <property type="match status" value="1"/>
</dbReference>
<dbReference type="Pfam" id="PF03550">
    <property type="entry name" value="LolB"/>
    <property type="match status" value="1"/>
</dbReference>
<dbReference type="SUPFAM" id="SSF89392">
    <property type="entry name" value="Prokaryotic lipoproteins and lipoprotein localization factors"/>
    <property type="match status" value="1"/>
</dbReference>
<dbReference type="PROSITE" id="PS51257">
    <property type="entry name" value="PROKAR_LIPOPROTEIN"/>
    <property type="match status" value="1"/>
</dbReference>
<reference key="1">
    <citation type="journal article" date="2005" name="Nat. Genet.">
        <title>The complete genome sequence of Francisella tularensis, the causative agent of tularemia.</title>
        <authorList>
            <person name="Larsson P."/>
            <person name="Oyston P.C.F."/>
            <person name="Chain P."/>
            <person name="Chu M.C."/>
            <person name="Duffield M."/>
            <person name="Fuxelius H.-H."/>
            <person name="Garcia E."/>
            <person name="Haelltorp G."/>
            <person name="Johansson D."/>
            <person name="Isherwood K.E."/>
            <person name="Karp P.D."/>
            <person name="Larsson E."/>
            <person name="Liu Y."/>
            <person name="Michell S."/>
            <person name="Prior J."/>
            <person name="Prior R."/>
            <person name="Malfatti S."/>
            <person name="Sjoestedt A."/>
            <person name="Svensson K."/>
            <person name="Thompson N."/>
            <person name="Vergez L."/>
            <person name="Wagg J.K."/>
            <person name="Wren B.W."/>
            <person name="Lindler L.E."/>
            <person name="Andersson S.G.E."/>
            <person name="Forsman M."/>
            <person name="Titball R.W."/>
        </authorList>
    </citation>
    <scope>NUCLEOTIDE SEQUENCE [LARGE SCALE GENOMIC DNA]</scope>
    <source>
        <strain>SCHU S4 / Schu 4</strain>
    </source>
</reference>
<proteinExistence type="inferred from homology"/>
<sequence length="207" mass="23339">MSKLKIDTKRRFSLLIALVLIISLSSCATTQTNVTTKTVFNQETTYHNLLKLKKWQANGVIGIIYDNQAESANYTYLQDGDNFSIKLYGPLGIGSIEIKGDTNSVLLANSKGQKLTAKDAKTLMLEQLGWYVPVEGLKYWIKAIAIPNIRQTSELNTNNLLSKLSQNGWSISYSNYQLVDSKYPLPTKIRMSRDNLTLKIVIKSWQI</sequence>
<feature type="signal peptide" evidence="1">
    <location>
        <begin position="1"/>
        <end position="26"/>
    </location>
</feature>
<feature type="chain" id="PRO_0000336604" description="Outer-membrane lipoprotein LolB">
    <location>
        <begin position="27"/>
        <end position="207"/>
    </location>
</feature>
<feature type="lipid moiety-binding region" description="N-palmitoyl cysteine" evidence="1">
    <location>
        <position position="27"/>
    </location>
</feature>
<feature type="lipid moiety-binding region" description="S-diacylglycerol cysteine" evidence="1">
    <location>
        <position position="27"/>
    </location>
</feature>
<evidence type="ECO:0000255" key="1">
    <source>
        <dbReference type="HAMAP-Rule" id="MF_00233"/>
    </source>
</evidence>
<evidence type="ECO:0000305" key="2"/>
<keyword id="KW-0998">Cell outer membrane</keyword>
<keyword id="KW-0143">Chaperone</keyword>
<keyword id="KW-0449">Lipoprotein</keyword>
<keyword id="KW-0472">Membrane</keyword>
<keyword id="KW-0564">Palmitate</keyword>
<keyword id="KW-0653">Protein transport</keyword>
<keyword id="KW-1185">Reference proteome</keyword>
<keyword id="KW-0732">Signal</keyword>
<keyword id="KW-0813">Transport</keyword>
<protein>
    <recommendedName>
        <fullName evidence="1">Outer-membrane lipoprotein LolB</fullName>
    </recommendedName>
</protein>